<name>RSMH_STRPF</name>
<keyword id="KW-0963">Cytoplasm</keyword>
<keyword id="KW-0489">Methyltransferase</keyword>
<keyword id="KW-0698">rRNA processing</keyword>
<keyword id="KW-0949">S-adenosyl-L-methionine</keyword>
<keyword id="KW-0808">Transferase</keyword>
<sequence length="316" mass="35689">MTKEFHHVTVLLHETVDMLDIKPNGIYVDATLGGSGHSAYLLSKLSEQGHLYCFDQDQKAIDNAQVTLKSYIDKGQVTFIKDNFRHLKARLTALGVDEIDGILYDLGVSSPQLDERERGFSYKQDAPLDMRMDRQSLLTAYEVVNTYPFNDLVKIFFKYGEDKFSKQIARKIEQARAIKPIETTTELAELIKAAKPAKELKKKGHPAKQIFQAIRIEVNDELGAADESIQDAMELLALDGRISVITFHSLEDRLTKQLFKEASTVDVPKGLPLIPEDMKPTFELVSRKPILPSHSELTANKRAHSAKLRVAKKIRK</sequence>
<organism>
    <name type="scientific">Streptococcus pyogenes serotype M4 (strain MGAS10750)</name>
    <dbReference type="NCBI Taxonomy" id="370554"/>
    <lineage>
        <taxon>Bacteria</taxon>
        <taxon>Bacillati</taxon>
        <taxon>Bacillota</taxon>
        <taxon>Bacilli</taxon>
        <taxon>Lactobacillales</taxon>
        <taxon>Streptococcaceae</taxon>
        <taxon>Streptococcus</taxon>
    </lineage>
</organism>
<protein>
    <recommendedName>
        <fullName evidence="1">Ribosomal RNA small subunit methyltransferase H</fullName>
        <ecNumber evidence="1">2.1.1.199</ecNumber>
    </recommendedName>
    <alternativeName>
        <fullName evidence="1">16S rRNA m(4)C1402 methyltransferase</fullName>
    </alternativeName>
    <alternativeName>
        <fullName evidence="1">rRNA (cytosine-N(4)-)-methyltransferase RsmH</fullName>
    </alternativeName>
</protein>
<proteinExistence type="inferred from homology"/>
<reference key="1">
    <citation type="journal article" date="2006" name="Proc. Natl. Acad. Sci. U.S.A.">
        <title>Molecular genetic anatomy of inter- and intraserotype variation in the human bacterial pathogen group A Streptococcus.</title>
        <authorList>
            <person name="Beres S.B."/>
            <person name="Richter E.W."/>
            <person name="Nagiec M.J."/>
            <person name="Sumby P."/>
            <person name="Porcella S.F."/>
            <person name="DeLeo F.R."/>
            <person name="Musser J.M."/>
        </authorList>
    </citation>
    <scope>NUCLEOTIDE SEQUENCE [LARGE SCALE GENOMIC DNA]</scope>
    <source>
        <strain>MGAS10750</strain>
    </source>
</reference>
<comment type="function">
    <text evidence="1">Specifically methylates the N4 position of cytidine in position 1402 (C1402) of 16S rRNA.</text>
</comment>
<comment type="catalytic activity">
    <reaction evidence="1">
        <text>cytidine(1402) in 16S rRNA + S-adenosyl-L-methionine = N(4)-methylcytidine(1402) in 16S rRNA + S-adenosyl-L-homocysteine + H(+)</text>
        <dbReference type="Rhea" id="RHEA:42928"/>
        <dbReference type="Rhea" id="RHEA-COMP:10286"/>
        <dbReference type="Rhea" id="RHEA-COMP:10287"/>
        <dbReference type="ChEBI" id="CHEBI:15378"/>
        <dbReference type="ChEBI" id="CHEBI:57856"/>
        <dbReference type="ChEBI" id="CHEBI:59789"/>
        <dbReference type="ChEBI" id="CHEBI:74506"/>
        <dbReference type="ChEBI" id="CHEBI:82748"/>
        <dbReference type="EC" id="2.1.1.199"/>
    </reaction>
</comment>
<comment type="subcellular location">
    <subcellularLocation>
        <location evidence="1">Cytoplasm</location>
    </subcellularLocation>
</comment>
<comment type="similarity">
    <text evidence="1">Belongs to the methyltransferase superfamily. RsmH family.</text>
</comment>
<comment type="sequence caution" evidence="2">
    <conflict type="erroneous initiation">
        <sequence resource="EMBL-CDS" id="ABF38428"/>
    </conflict>
</comment>
<gene>
    <name evidence="1" type="primary">rsmH</name>
    <name type="synonym">mraW</name>
    <name type="ordered locus">MGAS10750_Spy1478</name>
</gene>
<evidence type="ECO:0000255" key="1">
    <source>
        <dbReference type="HAMAP-Rule" id="MF_01007"/>
    </source>
</evidence>
<evidence type="ECO:0000305" key="2"/>
<feature type="chain" id="PRO_0000387161" description="Ribosomal RNA small subunit methyltransferase H">
    <location>
        <begin position="1"/>
        <end position="316"/>
    </location>
</feature>
<feature type="binding site" evidence="1">
    <location>
        <begin position="35"/>
        <end position="37"/>
    </location>
    <ligand>
        <name>S-adenosyl-L-methionine</name>
        <dbReference type="ChEBI" id="CHEBI:59789"/>
    </ligand>
</feature>
<feature type="binding site" evidence="1">
    <location>
        <position position="55"/>
    </location>
    <ligand>
        <name>S-adenosyl-L-methionine</name>
        <dbReference type="ChEBI" id="CHEBI:59789"/>
    </ligand>
</feature>
<feature type="binding site" evidence="1">
    <location>
        <position position="84"/>
    </location>
    <ligand>
        <name>S-adenosyl-L-methionine</name>
        <dbReference type="ChEBI" id="CHEBI:59789"/>
    </ligand>
</feature>
<feature type="binding site" evidence="1">
    <location>
        <position position="105"/>
    </location>
    <ligand>
        <name>S-adenosyl-L-methionine</name>
        <dbReference type="ChEBI" id="CHEBI:59789"/>
    </ligand>
</feature>
<feature type="binding site" evidence="1">
    <location>
        <position position="112"/>
    </location>
    <ligand>
        <name>S-adenosyl-L-methionine</name>
        <dbReference type="ChEBI" id="CHEBI:59789"/>
    </ligand>
</feature>
<accession>Q1J5F8</accession>
<dbReference type="EC" id="2.1.1.199" evidence="1"/>
<dbReference type="EMBL" id="CP000262">
    <property type="protein sequence ID" value="ABF38428.1"/>
    <property type="status" value="ALT_INIT"/>
    <property type="molecule type" value="Genomic_DNA"/>
</dbReference>
<dbReference type="SMR" id="Q1J5F8"/>
<dbReference type="KEGG" id="spi:MGAS10750_Spy1478"/>
<dbReference type="HOGENOM" id="CLU_038422_2_0_9"/>
<dbReference type="Proteomes" id="UP000002434">
    <property type="component" value="Chromosome"/>
</dbReference>
<dbReference type="GO" id="GO:0005737">
    <property type="term" value="C:cytoplasm"/>
    <property type="evidence" value="ECO:0007669"/>
    <property type="project" value="UniProtKB-SubCell"/>
</dbReference>
<dbReference type="GO" id="GO:0071424">
    <property type="term" value="F:rRNA (cytosine-N4-)-methyltransferase activity"/>
    <property type="evidence" value="ECO:0007669"/>
    <property type="project" value="UniProtKB-UniRule"/>
</dbReference>
<dbReference type="GO" id="GO:0070475">
    <property type="term" value="P:rRNA base methylation"/>
    <property type="evidence" value="ECO:0007669"/>
    <property type="project" value="UniProtKB-UniRule"/>
</dbReference>
<dbReference type="FunFam" id="1.10.150.170:FF:000001">
    <property type="entry name" value="Ribosomal RNA small subunit methyltransferase H"/>
    <property type="match status" value="1"/>
</dbReference>
<dbReference type="Gene3D" id="1.10.150.170">
    <property type="entry name" value="Putative methyltransferase TM0872, insert domain"/>
    <property type="match status" value="1"/>
</dbReference>
<dbReference type="Gene3D" id="3.40.50.150">
    <property type="entry name" value="Vaccinia Virus protein VP39"/>
    <property type="match status" value="1"/>
</dbReference>
<dbReference type="HAMAP" id="MF_01007">
    <property type="entry name" value="16SrRNA_methyltr_H"/>
    <property type="match status" value="1"/>
</dbReference>
<dbReference type="InterPro" id="IPR002903">
    <property type="entry name" value="RsmH"/>
</dbReference>
<dbReference type="InterPro" id="IPR023397">
    <property type="entry name" value="SAM-dep_MeTrfase_MraW_recog"/>
</dbReference>
<dbReference type="InterPro" id="IPR029063">
    <property type="entry name" value="SAM-dependent_MTases_sf"/>
</dbReference>
<dbReference type="NCBIfam" id="TIGR00006">
    <property type="entry name" value="16S rRNA (cytosine(1402)-N(4))-methyltransferase RsmH"/>
    <property type="match status" value="1"/>
</dbReference>
<dbReference type="PANTHER" id="PTHR11265:SF0">
    <property type="entry name" value="12S RRNA N4-METHYLCYTIDINE METHYLTRANSFERASE"/>
    <property type="match status" value="1"/>
</dbReference>
<dbReference type="PANTHER" id="PTHR11265">
    <property type="entry name" value="S-ADENOSYL-METHYLTRANSFERASE MRAW"/>
    <property type="match status" value="1"/>
</dbReference>
<dbReference type="Pfam" id="PF01795">
    <property type="entry name" value="Methyltransf_5"/>
    <property type="match status" value="1"/>
</dbReference>
<dbReference type="PIRSF" id="PIRSF004486">
    <property type="entry name" value="MraW"/>
    <property type="match status" value="1"/>
</dbReference>
<dbReference type="SUPFAM" id="SSF81799">
    <property type="entry name" value="Putative methyltransferase TM0872, insert domain"/>
    <property type="match status" value="1"/>
</dbReference>
<dbReference type="SUPFAM" id="SSF53335">
    <property type="entry name" value="S-adenosyl-L-methionine-dependent methyltransferases"/>
    <property type="match status" value="1"/>
</dbReference>